<dbReference type="EMBL" id="BA000033">
    <property type="protein sequence ID" value="BAB94984.1"/>
    <property type="molecule type" value="Genomic_DNA"/>
</dbReference>
<dbReference type="RefSeq" id="WP_000531320.1">
    <property type="nucleotide sequence ID" value="NC_003923.1"/>
</dbReference>
<dbReference type="SMR" id="P67250"/>
<dbReference type="KEGG" id="sam:MW1119"/>
<dbReference type="HOGENOM" id="CLU_129218_1_1_9"/>
<dbReference type="Gene3D" id="1.10.10.10">
    <property type="entry name" value="Winged helix-like DNA-binding domain superfamily/Winged helix DNA-binding domain"/>
    <property type="match status" value="1"/>
</dbReference>
<dbReference type="HAMAP" id="MF_00245">
    <property type="entry name" value="UPF0122"/>
    <property type="match status" value="1"/>
</dbReference>
<dbReference type="InterPro" id="IPR013324">
    <property type="entry name" value="RNA_pol_sigma_r3/r4-like"/>
</dbReference>
<dbReference type="InterPro" id="IPR007394">
    <property type="entry name" value="UPF0122"/>
</dbReference>
<dbReference type="InterPro" id="IPR054831">
    <property type="entry name" value="UPF0122_fam_protein"/>
</dbReference>
<dbReference type="InterPro" id="IPR036388">
    <property type="entry name" value="WH-like_DNA-bd_sf"/>
</dbReference>
<dbReference type="NCBIfam" id="NF001067">
    <property type="entry name" value="PRK00118.1-2"/>
    <property type="match status" value="1"/>
</dbReference>
<dbReference type="NCBIfam" id="NF001070">
    <property type="entry name" value="PRK00118.1-6"/>
    <property type="match status" value="1"/>
</dbReference>
<dbReference type="NCBIfam" id="NF045758">
    <property type="entry name" value="YlxM"/>
    <property type="match status" value="1"/>
</dbReference>
<dbReference type="PANTHER" id="PTHR40083">
    <property type="entry name" value="UPF0122 PROTEIN CBO2450/CLC_2298"/>
    <property type="match status" value="1"/>
</dbReference>
<dbReference type="PANTHER" id="PTHR40083:SF1">
    <property type="entry name" value="UPF0122 PROTEIN YLXM"/>
    <property type="match status" value="1"/>
</dbReference>
<dbReference type="Pfam" id="PF04297">
    <property type="entry name" value="UPF0122"/>
    <property type="match status" value="1"/>
</dbReference>
<dbReference type="SUPFAM" id="SSF88659">
    <property type="entry name" value="Sigma3 and sigma4 domains of RNA polymerase sigma factors"/>
    <property type="match status" value="1"/>
</dbReference>
<evidence type="ECO:0000255" key="1">
    <source>
        <dbReference type="HAMAP-Rule" id="MF_00245"/>
    </source>
</evidence>
<name>Y1119_STAAW</name>
<accession>P67250</accession>
<accession>Q99UN4</accession>
<proteinExistence type="inferred from homology"/>
<organism>
    <name type="scientific">Staphylococcus aureus (strain MW2)</name>
    <dbReference type="NCBI Taxonomy" id="196620"/>
    <lineage>
        <taxon>Bacteria</taxon>
        <taxon>Bacillati</taxon>
        <taxon>Bacillota</taxon>
        <taxon>Bacilli</taxon>
        <taxon>Bacillales</taxon>
        <taxon>Staphylococcaceae</taxon>
        <taxon>Staphylococcus</taxon>
    </lineage>
</organism>
<reference key="1">
    <citation type="journal article" date="2002" name="Lancet">
        <title>Genome and virulence determinants of high virulence community-acquired MRSA.</title>
        <authorList>
            <person name="Baba T."/>
            <person name="Takeuchi F."/>
            <person name="Kuroda M."/>
            <person name="Yuzawa H."/>
            <person name="Aoki K."/>
            <person name="Oguchi A."/>
            <person name="Nagai Y."/>
            <person name="Iwama N."/>
            <person name="Asano K."/>
            <person name="Naimi T."/>
            <person name="Kuroda H."/>
            <person name="Cui L."/>
            <person name="Yamamoto K."/>
            <person name="Hiramatsu K."/>
        </authorList>
    </citation>
    <scope>NUCLEOTIDE SEQUENCE [LARGE SCALE GENOMIC DNA]</scope>
    <source>
        <strain>MW2</strain>
    </source>
</reference>
<comment type="function">
    <text evidence="1">Might take part in the signal recognition particle (SRP) pathway. This is inferred from the conservation of its genetic proximity to ftsY/ffh. May be a regulatory protein.</text>
</comment>
<comment type="similarity">
    <text evidence="1">Belongs to the UPF0122 family.</text>
</comment>
<protein>
    <recommendedName>
        <fullName evidence="1">UPF0122 protein MW1119</fullName>
    </recommendedName>
</protein>
<sequence>MGQNDLVKTLRMNYLFDFYQSLLTNKQRNYLELFYLEDYSLSEIADTFNVSRQAVYDNIRRTGDLVEDYEKKLELYQKFEQRREIYDEMKQHLSNPEQIQRYIQQLEDLE</sequence>
<feature type="chain" id="PRO_0000211880" description="UPF0122 protein MW1119">
    <location>
        <begin position="1"/>
        <end position="110"/>
    </location>
</feature>
<gene>
    <name type="ordered locus">MW1119</name>
</gene>